<name>NOM1_DROME</name>
<feature type="chain" id="PRO_0000286825" description="Nucleolar MIF4G domain-containing protein 1 homolog">
    <location>
        <begin position="1"/>
        <end position="854"/>
    </location>
</feature>
<feature type="domain" description="MIF4G" evidence="2">
    <location>
        <begin position="352"/>
        <end position="553"/>
    </location>
</feature>
<feature type="domain" description="MI" evidence="2">
    <location>
        <begin position="650"/>
        <end position="764"/>
    </location>
</feature>
<feature type="region of interest" description="Disordered" evidence="3">
    <location>
        <begin position="1"/>
        <end position="38"/>
    </location>
</feature>
<feature type="region of interest" description="Disordered" evidence="3">
    <location>
        <begin position="55"/>
        <end position="105"/>
    </location>
</feature>
<feature type="region of interest" description="Disordered" evidence="3">
    <location>
        <begin position="120"/>
        <end position="161"/>
    </location>
</feature>
<feature type="region of interest" description="Disordered" evidence="3">
    <location>
        <begin position="217"/>
        <end position="306"/>
    </location>
</feature>
<feature type="compositionally biased region" description="Basic and acidic residues" evidence="3">
    <location>
        <begin position="15"/>
        <end position="28"/>
    </location>
</feature>
<feature type="compositionally biased region" description="Basic residues" evidence="3">
    <location>
        <begin position="60"/>
        <end position="71"/>
    </location>
</feature>
<feature type="compositionally biased region" description="Acidic residues" evidence="3">
    <location>
        <begin position="88"/>
        <end position="105"/>
    </location>
</feature>
<feature type="compositionally biased region" description="Basic and acidic residues" evidence="3">
    <location>
        <begin position="135"/>
        <end position="156"/>
    </location>
</feature>
<feature type="compositionally biased region" description="Basic and acidic residues" evidence="3">
    <location>
        <begin position="217"/>
        <end position="238"/>
    </location>
</feature>
<feature type="compositionally biased region" description="Acidic residues" evidence="3">
    <location>
        <begin position="242"/>
        <end position="289"/>
    </location>
</feature>
<feature type="compositionally biased region" description="Basic and acidic residues" evidence="3">
    <location>
        <begin position="290"/>
        <end position="306"/>
    </location>
</feature>
<accession>Q9W020</accession>
<reference key="1">
    <citation type="journal article" date="2000" name="Science">
        <title>The genome sequence of Drosophila melanogaster.</title>
        <authorList>
            <person name="Adams M.D."/>
            <person name="Celniker S.E."/>
            <person name="Holt R.A."/>
            <person name="Evans C.A."/>
            <person name="Gocayne J.D."/>
            <person name="Amanatides P.G."/>
            <person name="Scherer S.E."/>
            <person name="Li P.W."/>
            <person name="Hoskins R.A."/>
            <person name="Galle R.F."/>
            <person name="George R.A."/>
            <person name="Lewis S.E."/>
            <person name="Richards S."/>
            <person name="Ashburner M."/>
            <person name="Henderson S.N."/>
            <person name="Sutton G.G."/>
            <person name="Wortman J.R."/>
            <person name="Yandell M.D."/>
            <person name="Zhang Q."/>
            <person name="Chen L.X."/>
            <person name="Brandon R.C."/>
            <person name="Rogers Y.-H.C."/>
            <person name="Blazej R.G."/>
            <person name="Champe M."/>
            <person name="Pfeiffer B.D."/>
            <person name="Wan K.H."/>
            <person name="Doyle C."/>
            <person name="Baxter E.G."/>
            <person name="Helt G."/>
            <person name="Nelson C.R."/>
            <person name="Miklos G.L.G."/>
            <person name="Abril J.F."/>
            <person name="Agbayani A."/>
            <person name="An H.-J."/>
            <person name="Andrews-Pfannkoch C."/>
            <person name="Baldwin D."/>
            <person name="Ballew R.M."/>
            <person name="Basu A."/>
            <person name="Baxendale J."/>
            <person name="Bayraktaroglu L."/>
            <person name="Beasley E.M."/>
            <person name="Beeson K.Y."/>
            <person name="Benos P.V."/>
            <person name="Berman B.P."/>
            <person name="Bhandari D."/>
            <person name="Bolshakov S."/>
            <person name="Borkova D."/>
            <person name="Botchan M.R."/>
            <person name="Bouck J."/>
            <person name="Brokstein P."/>
            <person name="Brottier P."/>
            <person name="Burtis K.C."/>
            <person name="Busam D.A."/>
            <person name="Butler H."/>
            <person name="Cadieu E."/>
            <person name="Center A."/>
            <person name="Chandra I."/>
            <person name="Cherry J.M."/>
            <person name="Cawley S."/>
            <person name="Dahlke C."/>
            <person name="Davenport L.B."/>
            <person name="Davies P."/>
            <person name="de Pablos B."/>
            <person name="Delcher A."/>
            <person name="Deng Z."/>
            <person name="Mays A.D."/>
            <person name="Dew I."/>
            <person name="Dietz S.M."/>
            <person name="Dodson K."/>
            <person name="Doup L.E."/>
            <person name="Downes M."/>
            <person name="Dugan-Rocha S."/>
            <person name="Dunkov B.C."/>
            <person name="Dunn P."/>
            <person name="Durbin K.J."/>
            <person name="Evangelista C.C."/>
            <person name="Ferraz C."/>
            <person name="Ferriera S."/>
            <person name="Fleischmann W."/>
            <person name="Fosler C."/>
            <person name="Gabrielian A.E."/>
            <person name="Garg N.S."/>
            <person name="Gelbart W.M."/>
            <person name="Glasser K."/>
            <person name="Glodek A."/>
            <person name="Gong F."/>
            <person name="Gorrell J.H."/>
            <person name="Gu Z."/>
            <person name="Guan P."/>
            <person name="Harris M."/>
            <person name="Harris N.L."/>
            <person name="Harvey D.A."/>
            <person name="Heiman T.J."/>
            <person name="Hernandez J.R."/>
            <person name="Houck J."/>
            <person name="Hostin D."/>
            <person name="Houston K.A."/>
            <person name="Howland T.J."/>
            <person name="Wei M.-H."/>
            <person name="Ibegwam C."/>
            <person name="Jalali M."/>
            <person name="Kalush F."/>
            <person name="Karpen G.H."/>
            <person name="Ke Z."/>
            <person name="Kennison J.A."/>
            <person name="Ketchum K.A."/>
            <person name="Kimmel B.E."/>
            <person name="Kodira C.D."/>
            <person name="Kraft C.L."/>
            <person name="Kravitz S."/>
            <person name="Kulp D."/>
            <person name="Lai Z."/>
            <person name="Lasko P."/>
            <person name="Lei Y."/>
            <person name="Levitsky A.A."/>
            <person name="Li J.H."/>
            <person name="Li Z."/>
            <person name="Liang Y."/>
            <person name="Lin X."/>
            <person name="Liu X."/>
            <person name="Mattei B."/>
            <person name="McIntosh T.C."/>
            <person name="McLeod M.P."/>
            <person name="McPherson D."/>
            <person name="Merkulov G."/>
            <person name="Milshina N.V."/>
            <person name="Mobarry C."/>
            <person name="Morris J."/>
            <person name="Moshrefi A."/>
            <person name="Mount S.M."/>
            <person name="Moy M."/>
            <person name="Murphy B."/>
            <person name="Murphy L."/>
            <person name="Muzny D.M."/>
            <person name="Nelson D.L."/>
            <person name="Nelson D.R."/>
            <person name="Nelson K.A."/>
            <person name="Nixon K."/>
            <person name="Nusskern D.R."/>
            <person name="Pacleb J.M."/>
            <person name="Palazzolo M."/>
            <person name="Pittman G.S."/>
            <person name="Pan S."/>
            <person name="Pollard J."/>
            <person name="Puri V."/>
            <person name="Reese M.G."/>
            <person name="Reinert K."/>
            <person name="Remington K."/>
            <person name="Saunders R.D.C."/>
            <person name="Scheeler F."/>
            <person name="Shen H."/>
            <person name="Shue B.C."/>
            <person name="Siden-Kiamos I."/>
            <person name="Simpson M."/>
            <person name="Skupski M.P."/>
            <person name="Smith T.J."/>
            <person name="Spier E."/>
            <person name="Spradling A.C."/>
            <person name="Stapleton M."/>
            <person name="Strong R."/>
            <person name="Sun E."/>
            <person name="Svirskas R."/>
            <person name="Tector C."/>
            <person name="Turner R."/>
            <person name="Venter E."/>
            <person name="Wang A.H."/>
            <person name="Wang X."/>
            <person name="Wang Z.-Y."/>
            <person name="Wassarman D.A."/>
            <person name="Weinstock G.M."/>
            <person name="Weissenbach J."/>
            <person name="Williams S.M."/>
            <person name="Woodage T."/>
            <person name="Worley K.C."/>
            <person name="Wu D."/>
            <person name="Yang S."/>
            <person name="Yao Q.A."/>
            <person name="Ye J."/>
            <person name="Yeh R.-F."/>
            <person name="Zaveri J.S."/>
            <person name="Zhan M."/>
            <person name="Zhang G."/>
            <person name="Zhao Q."/>
            <person name="Zheng L."/>
            <person name="Zheng X.H."/>
            <person name="Zhong F.N."/>
            <person name="Zhong W."/>
            <person name="Zhou X."/>
            <person name="Zhu S.C."/>
            <person name="Zhu X."/>
            <person name="Smith H.O."/>
            <person name="Gibbs R.A."/>
            <person name="Myers E.W."/>
            <person name="Rubin G.M."/>
            <person name="Venter J.C."/>
        </authorList>
    </citation>
    <scope>NUCLEOTIDE SEQUENCE [LARGE SCALE GENOMIC DNA]</scope>
    <source>
        <strain>Berkeley</strain>
    </source>
</reference>
<reference key="2">
    <citation type="journal article" date="2002" name="Genome Biol.">
        <title>Annotation of the Drosophila melanogaster euchromatic genome: a systematic review.</title>
        <authorList>
            <person name="Misra S."/>
            <person name="Crosby M.A."/>
            <person name="Mungall C.J."/>
            <person name="Matthews B.B."/>
            <person name="Campbell K.S."/>
            <person name="Hradecky P."/>
            <person name="Huang Y."/>
            <person name="Kaminker J.S."/>
            <person name="Millburn G.H."/>
            <person name="Prochnik S.E."/>
            <person name="Smith C.D."/>
            <person name="Tupy J.L."/>
            <person name="Whitfield E.J."/>
            <person name="Bayraktaroglu L."/>
            <person name="Berman B.P."/>
            <person name="Bettencourt B.R."/>
            <person name="Celniker S.E."/>
            <person name="de Grey A.D.N.J."/>
            <person name="Drysdale R.A."/>
            <person name="Harris N.L."/>
            <person name="Richter J."/>
            <person name="Russo S."/>
            <person name="Schroeder A.J."/>
            <person name="Shu S.Q."/>
            <person name="Stapleton M."/>
            <person name="Yamada C."/>
            <person name="Ashburner M."/>
            <person name="Gelbart W.M."/>
            <person name="Rubin G.M."/>
            <person name="Lewis S.E."/>
        </authorList>
    </citation>
    <scope>GENOME REANNOTATION</scope>
    <source>
        <strain>Berkeley</strain>
    </source>
</reference>
<reference key="3">
    <citation type="journal article" date="2002" name="Genome Biol.">
        <title>A Drosophila full-length cDNA resource.</title>
        <authorList>
            <person name="Stapleton M."/>
            <person name="Carlson J.W."/>
            <person name="Brokstein P."/>
            <person name="Yu C."/>
            <person name="Champe M."/>
            <person name="George R.A."/>
            <person name="Guarin H."/>
            <person name="Kronmiller B."/>
            <person name="Pacleb J.M."/>
            <person name="Park S."/>
            <person name="Wan K.H."/>
            <person name="Rubin G.M."/>
            <person name="Celniker S.E."/>
        </authorList>
    </citation>
    <scope>NUCLEOTIDE SEQUENCE [LARGE SCALE MRNA]</scope>
    <source>
        <strain>Berkeley</strain>
        <tissue>Embryo</tissue>
    </source>
</reference>
<evidence type="ECO:0000250" key="1"/>
<evidence type="ECO:0000255" key="2">
    <source>
        <dbReference type="PROSITE-ProRule" id="PRU00698"/>
    </source>
</evidence>
<evidence type="ECO:0000256" key="3">
    <source>
        <dbReference type="SAM" id="MobiDB-lite"/>
    </source>
</evidence>
<evidence type="ECO:0000305" key="4"/>
<organism>
    <name type="scientific">Drosophila melanogaster</name>
    <name type="common">Fruit fly</name>
    <dbReference type="NCBI Taxonomy" id="7227"/>
    <lineage>
        <taxon>Eukaryota</taxon>
        <taxon>Metazoa</taxon>
        <taxon>Ecdysozoa</taxon>
        <taxon>Arthropoda</taxon>
        <taxon>Hexapoda</taxon>
        <taxon>Insecta</taxon>
        <taxon>Pterygota</taxon>
        <taxon>Neoptera</taxon>
        <taxon>Endopterygota</taxon>
        <taxon>Diptera</taxon>
        <taxon>Brachycera</taxon>
        <taxon>Muscomorpha</taxon>
        <taxon>Ephydroidea</taxon>
        <taxon>Drosophilidae</taxon>
        <taxon>Drosophila</taxon>
        <taxon>Sophophora</taxon>
    </lineage>
</organism>
<proteinExistence type="evidence at transcript level"/>
<keyword id="KW-0539">Nucleus</keyword>
<keyword id="KW-1185">Reference proteome</keyword>
<gene>
    <name type="ORF">CG9004</name>
</gene>
<sequence>MAKIKKKEAKAKPLTRKEQRKQKSEFKKQNKRLYFAGKTNGTQRVAAAAEALAAQSQLGKNKKKKRSKKPKIINPDEIPKEQLLSGEIDSDDDESIDSDFSDAEVDALLPAREKMEVYEPLGKKVKKTTGGAIQRQDEEAVRRKELRQQKELESKSKKQRIKQLRIENEEDDREINKLEKKLKLNKSKDKNRLVRKMFNDGLDYLLDFVLDDEEEKRKWEEKQERKKKLKEQQEKEEAGMWSDEEEDKEDRDEPMDNFSEDDSGSEGEDDDEDLTGEEEQSEEDSEQEENAPKIKEDIYGRKRDAEGNILPDPVELEASAAGQKYIPPHQRALMAASAGSSEKQAEILARLLKQCKGLLNRLSEANLHKIAAGIEELYMKNSRYNMNETLTKLIQEALLGYTRTNERMVQEHMVLLAYLHAQVGSEIGAHFLQTFVELFDGYVKNIATLEVEDKQLNNLVLVLCYMYLFKIYELNLLMELIGKLSDQLCEKSVECLLLIFQSIGFRLRKDDPLAFKTMMQKVQSQIASAPLELKENPRLRFMVDILNAVKNNNMQKLPQYDPELAENLRKRLKAMLKNDRYVVTLNITLEDLLRADKVGKWWIVGSAWTGNLDEMGSAKQKQDKNSSKSANGGFADQLLELARKQQMNTAERRNIFCIIMSAADYVDAFEKILHLSLKDQRAVAYVIIHCALNEKRANPYYAHLALKFCQFNRKYQLAFQFASWDRINDIEKLSKPQIRNLASFLQQVILAAGLQLSVLKVVDFMQLDKLSFYFMKEVMVRLLLANDEREIYQTFERVAKNTKLQQFKQSVRLFLQHFLLQEEQLDKLKLKDEDRQLLQQRVDHIDKLLAYVDL</sequence>
<comment type="subcellular location">
    <subcellularLocation>
        <location evidence="1">Nucleus</location>
        <location evidence="1">Nucleolus</location>
    </subcellularLocation>
</comment>
<comment type="similarity">
    <text evidence="4">Belongs to the CWC22 family.</text>
</comment>
<dbReference type="EMBL" id="AE014296">
    <property type="protein sequence ID" value="AAF47640.1"/>
    <property type="molecule type" value="Genomic_DNA"/>
</dbReference>
<dbReference type="EMBL" id="BT010298">
    <property type="protein sequence ID" value="AAQ23616.1"/>
    <property type="molecule type" value="mRNA"/>
</dbReference>
<dbReference type="RefSeq" id="NP_647717.1">
    <property type="nucleotide sequence ID" value="NM_139460.2"/>
</dbReference>
<dbReference type="SMR" id="Q9W020"/>
<dbReference type="BioGRID" id="63818">
    <property type="interactions" value="5"/>
</dbReference>
<dbReference type="FunCoup" id="Q9W020">
    <property type="interactions" value="1208"/>
</dbReference>
<dbReference type="IntAct" id="Q9W020">
    <property type="interactions" value="4"/>
</dbReference>
<dbReference type="STRING" id="7227.FBpp0072768"/>
<dbReference type="PaxDb" id="7227-FBpp0072768"/>
<dbReference type="DNASU" id="38303"/>
<dbReference type="EnsemblMetazoa" id="FBtr0072890">
    <property type="protein sequence ID" value="FBpp0072768"/>
    <property type="gene ID" value="FBgn0035336"/>
</dbReference>
<dbReference type="GeneID" id="38303"/>
<dbReference type="KEGG" id="dme:Dmel_CG9004"/>
<dbReference type="UCSC" id="CG9004-RA">
    <property type="organism name" value="d. melanogaster"/>
</dbReference>
<dbReference type="AGR" id="FB:FBgn0035336"/>
<dbReference type="FlyBase" id="FBgn0035336">
    <property type="gene designation" value="CG9004"/>
</dbReference>
<dbReference type="VEuPathDB" id="VectorBase:FBgn0035336"/>
<dbReference type="eggNOG" id="KOG2141">
    <property type="taxonomic scope" value="Eukaryota"/>
</dbReference>
<dbReference type="GeneTree" id="ENSGT00940000153458"/>
<dbReference type="HOGENOM" id="CLU_006786_0_0_1"/>
<dbReference type="InParanoid" id="Q9W020"/>
<dbReference type="OMA" id="FMVDILN"/>
<dbReference type="OrthoDB" id="10260961at2759"/>
<dbReference type="PhylomeDB" id="Q9W020"/>
<dbReference type="BioGRID-ORCS" id="38303">
    <property type="hits" value="0 hits in 1 CRISPR screen"/>
</dbReference>
<dbReference type="GenomeRNAi" id="38303"/>
<dbReference type="PRO" id="PR:Q9W020"/>
<dbReference type="Proteomes" id="UP000000803">
    <property type="component" value="Chromosome 3L"/>
</dbReference>
<dbReference type="Bgee" id="FBgn0035336">
    <property type="expression patterns" value="Expressed in posterior terminal follicle cell in ovary and 63 other cell types or tissues"/>
</dbReference>
<dbReference type="GO" id="GO:0005730">
    <property type="term" value="C:nucleolus"/>
    <property type="evidence" value="ECO:0000250"/>
    <property type="project" value="UniProtKB"/>
</dbReference>
<dbReference type="GO" id="GO:0003723">
    <property type="term" value="F:RNA binding"/>
    <property type="evidence" value="ECO:0000318"/>
    <property type="project" value="GO_Central"/>
</dbReference>
<dbReference type="GO" id="GO:0042274">
    <property type="term" value="P:ribosomal small subunit biogenesis"/>
    <property type="evidence" value="ECO:0000318"/>
    <property type="project" value="GO_Central"/>
</dbReference>
<dbReference type="FunFam" id="1.25.40.180:FF:000032">
    <property type="entry name" value="Nucleolar MIF4G domain-containing protein 1"/>
    <property type="match status" value="1"/>
</dbReference>
<dbReference type="Gene3D" id="1.25.40.180">
    <property type="match status" value="1"/>
</dbReference>
<dbReference type="InterPro" id="IPR016024">
    <property type="entry name" value="ARM-type_fold"/>
</dbReference>
<dbReference type="InterPro" id="IPR050781">
    <property type="entry name" value="CWC22_splicing_factor"/>
</dbReference>
<dbReference type="InterPro" id="IPR003891">
    <property type="entry name" value="Initiation_fac_eIF4g_MI"/>
</dbReference>
<dbReference type="InterPro" id="IPR003890">
    <property type="entry name" value="MIF4G-like_typ-3"/>
</dbReference>
<dbReference type="PANTHER" id="PTHR18034">
    <property type="entry name" value="CELL CYCLE CONTROL PROTEIN CWF22-RELATED"/>
    <property type="match status" value="1"/>
</dbReference>
<dbReference type="PANTHER" id="PTHR18034:SF4">
    <property type="entry name" value="NUCLEOLAR MIF4G DOMAIN-CONTAINING PROTEIN 1"/>
    <property type="match status" value="1"/>
</dbReference>
<dbReference type="Pfam" id="PF02847">
    <property type="entry name" value="MA3"/>
    <property type="match status" value="1"/>
</dbReference>
<dbReference type="Pfam" id="PF02854">
    <property type="entry name" value="MIF4G"/>
    <property type="match status" value="1"/>
</dbReference>
<dbReference type="SMART" id="SM00544">
    <property type="entry name" value="MA3"/>
    <property type="match status" value="1"/>
</dbReference>
<dbReference type="SMART" id="SM00543">
    <property type="entry name" value="MIF4G"/>
    <property type="match status" value="1"/>
</dbReference>
<dbReference type="SUPFAM" id="SSF48371">
    <property type="entry name" value="ARM repeat"/>
    <property type="match status" value="1"/>
</dbReference>
<dbReference type="PROSITE" id="PS51366">
    <property type="entry name" value="MI"/>
    <property type="match status" value="1"/>
</dbReference>
<protein>
    <recommendedName>
        <fullName>Nucleolar MIF4G domain-containing protein 1 homolog</fullName>
    </recommendedName>
</protein>